<proteinExistence type="inferred from homology"/>
<evidence type="ECO:0000255" key="1">
    <source>
        <dbReference type="HAMAP-Rule" id="MF_01456"/>
    </source>
</evidence>
<accession>A4XV11</accession>
<gene>
    <name evidence="1" type="primary">nuoK</name>
    <name type="ordered locus">Pmen_2421</name>
</gene>
<name>NUOK_ECTM1</name>
<feature type="chain" id="PRO_0000390170" description="NADH-quinone oxidoreductase subunit K">
    <location>
        <begin position="1"/>
        <end position="102"/>
    </location>
</feature>
<feature type="transmembrane region" description="Helical" evidence="1">
    <location>
        <begin position="6"/>
        <end position="26"/>
    </location>
</feature>
<feature type="transmembrane region" description="Helical" evidence="1">
    <location>
        <begin position="30"/>
        <end position="50"/>
    </location>
</feature>
<feature type="transmembrane region" description="Helical" evidence="1">
    <location>
        <begin position="62"/>
        <end position="82"/>
    </location>
</feature>
<sequence length="102" mass="10940">MTGIPMEHGLALAAALFCIGLVGLMVRRNILFILMSLEVMMNAAALAFVVAGARWGQPDGQVMFIMVITLAAAEASIGLAILLQLYRRFNTLDIDAASEMRG</sequence>
<protein>
    <recommendedName>
        <fullName evidence="1">NADH-quinone oxidoreductase subunit K</fullName>
        <ecNumber evidence="1">7.1.1.-</ecNumber>
    </recommendedName>
    <alternativeName>
        <fullName evidence="1">NADH dehydrogenase I subunit K</fullName>
    </alternativeName>
    <alternativeName>
        <fullName evidence="1">NDH-1 subunit K</fullName>
    </alternativeName>
</protein>
<reference key="1">
    <citation type="submission" date="2007-04" db="EMBL/GenBank/DDBJ databases">
        <title>Complete sequence of Pseudomonas mendocina ymp.</title>
        <authorList>
            <consortium name="US DOE Joint Genome Institute"/>
            <person name="Copeland A."/>
            <person name="Lucas S."/>
            <person name="Lapidus A."/>
            <person name="Barry K."/>
            <person name="Glavina del Rio T."/>
            <person name="Dalin E."/>
            <person name="Tice H."/>
            <person name="Pitluck S."/>
            <person name="Kiss H."/>
            <person name="Brettin T."/>
            <person name="Detter J.C."/>
            <person name="Bruce D."/>
            <person name="Han C."/>
            <person name="Schmutz J."/>
            <person name="Larimer F."/>
            <person name="Land M."/>
            <person name="Hauser L."/>
            <person name="Kyrpides N."/>
            <person name="Mikhailova N."/>
            <person name="Hersman L."/>
            <person name="Dubois J."/>
            <person name="Maurice P."/>
            <person name="Richardson P."/>
        </authorList>
    </citation>
    <scope>NUCLEOTIDE SEQUENCE [LARGE SCALE GENOMIC DNA]</scope>
    <source>
        <strain>ymp</strain>
    </source>
</reference>
<dbReference type="EC" id="7.1.1.-" evidence="1"/>
<dbReference type="EMBL" id="CP000680">
    <property type="protein sequence ID" value="ABP85177.1"/>
    <property type="molecule type" value="Genomic_DNA"/>
</dbReference>
<dbReference type="SMR" id="A4XV11"/>
<dbReference type="STRING" id="399739.Pmen_2421"/>
<dbReference type="KEGG" id="pmy:Pmen_2421"/>
<dbReference type="PATRIC" id="fig|399739.8.peg.2443"/>
<dbReference type="eggNOG" id="COG0713">
    <property type="taxonomic scope" value="Bacteria"/>
</dbReference>
<dbReference type="HOGENOM" id="CLU_144724_0_1_6"/>
<dbReference type="OrthoDB" id="9801357at2"/>
<dbReference type="GO" id="GO:0030964">
    <property type="term" value="C:NADH dehydrogenase complex"/>
    <property type="evidence" value="ECO:0007669"/>
    <property type="project" value="TreeGrafter"/>
</dbReference>
<dbReference type="GO" id="GO:0005886">
    <property type="term" value="C:plasma membrane"/>
    <property type="evidence" value="ECO:0007669"/>
    <property type="project" value="UniProtKB-SubCell"/>
</dbReference>
<dbReference type="GO" id="GO:0050136">
    <property type="term" value="F:NADH:ubiquinone reductase (non-electrogenic) activity"/>
    <property type="evidence" value="ECO:0007669"/>
    <property type="project" value="UniProtKB-UniRule"/>
</dbReference>
<dbReference type="GO" id="GO:0048038">
    <property type="term" value="F:quinone binding"/>
    <property type="evidence" value="ECO:0007669"/>
    <property type="project" value="UniProtKB-KW"/>
</dbReference>
<dbReference type="GO" id="GO:0042773">
    <property type="term" value="P:ATP synthesis coupled electron transport"/>
    <property type="evidence" value="ECO:0007669"/>
    <property type="project" value="InterPro"/>
</dbReference>
<dbReference type="FunFam" id="1.10.287.3510:FF:000001">
    <property type="entry name" value="NADH-quinone oxidoreductase subunit K"/>
    <property type="match status" value="1"/>
</dbReference>
<dbReference type="Gene3D" id="1.10.287.3510">
    <property type="match status" value="1"/>
</dbReference>
<dbReference type="HAMAP" id="MF_01456">
    <property type="entry name" value="NDH1_NuoK"/>
    <property type="match status" value="1"/>
</dbReference>
<dbReference type="InterPro" id="IPR001133">
    <property type="entry name" value="NADH_UbQ_OxRdtase_chain4L/K"/>
</dbReference>
<dbReference type="InterPro" id="IPR039428">
    <property type="entry name" value="NUOK/Mnh_C1-like"/>
</dbReference>
<dbReference type="NCBIfam" id="NF004319">
    <property type="entry name" value="PRK05715.1-1"/>
    <property type="match status" value="1"/>
</dbReference>
<dbReference type="NCBIfam" id="NF004320">
    <property type="entry name" value="PRK05715.1-2"/>
    <property type="match status" value="1"/>
</dbReference>
<dbReference type="PANTHER" id="PTHR11434:SF16">
    <property type="entry name" value="NADH-UBIQUINONE OXIDOREDUCTASE CHAIN 4L"/>
    <property type="match status" value="1"/>
</dbReference>
<dbReference type="PANTHER" id="PTHR11434">
    <property type="entry name" value="NADH-UBIQUINONE OXIDOREDUCTASE SUBUNIT ND4L"/>
    <property type="match status" value="1"/>
</dbReference>
<dbReference type="Pfam" id="PF00420">
    <property type="entry name" value="Oxidored_q2"/>
    <property type="match status" value="1"/>
</dbReference>
<keyword id="KW-0997">Cell inner membrane</keyword>
<keyword id="KW-1003">Cell membrane</keyword>
<keyword id="KW-0472">Membrane</keyword>
<keyword id="KW-0520">NAD</keyword>
<keyword id="KW-0874">Quinone</keyword>
<keyword id="KW-1278">Translocase</keyword>
<keyword id="KW-0812">Transmembrane</keyword>
<keyword id="KW-1133">Transmembrane helix</keyword>
<keyword id="KW-0813">Transport</keyword>
<keyword id="KW-0830">Ubiquinone</keyword>
<organism>
    <name type="scientific">Ectopseudomonas mendocina (strain ymp)</name>
    <name type="common">Pseudomonas mendocina</name>
    <dbReference type="NCBI Taxonomy" id="399739"/>
    <lineage>
        <taxon>Bacteria</taxon>
        <taxon>Pseudomonadati</taxon>
        <taxon>Pseudomonadota</taxon>
        <taxon>Gammaproteobacteria</taxon>
        <taxon>Pseudomonadales</taxon>
        <taxon>Pseudomonadaceae</taxon>
        <taxon>Ectopseudomonas</taxon>
    </lineage>
</organism>
<comment type="function">
    <text evidence="1">NDH-1 shuttles electrons from NADH, via FMN and iron-sulfur (Fe-S) centers, to quinones in the respiratory chain. The immediate electron acceptor for the enzyme in this species is believed to be ubiquinone. Couples the redox reaction to proton translocation (for every two electrons transferred, four hydrogen ions are translocated across the cytoplasmic membrane), and thus conserves the redox energy in a proton gradient.</text>
</comment>
<comment type="catalytic activity">
    <reaction evidence="1">
        <text>a quinone + NADH + 5 H(+)(in) = a quinol + NAD(+) + 4 H(+)(out)</text>
        <dbReference type="Rhea" id="RHEA:57888"/>
        <dbReference type="ChEBI" id="CHEBI:15378"/>
        <dbReference type="ChEBI" id="CHEBI:24646"/>
        <dbReference type="ChEBI" id="CHEBI:57540"/>
        <dbReference type="ChEBI" id="CHEBI:57945"/>
        <dbReference type="ChEBI" id="CHEBI:132124"/>
    </reaction>
</comment>
<comment type="subunit">
    <text evidence="1">NDH-1 is composed of 13 different subunits. Subunits NuoA, H, J, K, L, M, N constitute the membrane sector of the complex.</text>
</comment>
<comment type="subcellular location">
    <subcellularLocation>
        <location evidence="1">Cell inner membrane</location>
        <topology evidence="1">Multi-pass membrane protein</topology>
    </subcellularLocation>
</comment>
<comment type="similarity">
    <text evidence="1">Belongs to the complex I subunit 4L family.</text>
</comment>